<comment type="function">
    <text evidence="1">Allows the formation of correctly charged Asn-tRNA(Asn) or Gln-tRNA(Gln) through the transamidation of misacylated Asp-tRNA(Asn) or Glu-tRNA(Gln) in organisms which lack either or both of asparaginyl-tRNA or glutaminyl-tRNA synthetases. The reaction takes place in the presence of glutamine and ATP through an activated phospho-Asp-tRNA(Asn) or phospho-Glu-tRNA(Gln).</text>
</comment>
<comment type="catalytic activity">
    <reaction evidence="1">
        <text>L-glutamyl-tRNA(Gln) + L-glutamine + ATP + H2O = L-glutaminyl-tRNA(Gln) + L-glutamate + ADP + phosphate + H(+)</text>
        <dbReference type="Rhea" id="RHEA:17521"/>
        <dbReference type="Rhea" id="RHEA-COMP:9681"/>
        <dbReference type="Rhea" id="RHEA-COMP:9684"/>
        <dbReference type="ChEBI" id="CHEBI:15377"/>
        <dbReference type="ChEBI" id="CHEBI:15378"/>
        <dbReference type="ChEBI" id="CHEBI:29985"/>
        <dbReference type="ChEBI" id="CHEBI:30616"/>
        <dbReference type="ChEBI" id="CHEBI:43474"/>
        <dbReference type="ChEBI" id="CHEBI:58359"/>
        <dbReference type="ChEBI" id="CHEBI:78520"/>
        <dbReference type="ChEBI" id="CHEBI:78521"/>
        <dbReference type="ChEBI" id="CHEBI:456216"/>
    </reaction>
</comment>
<comment type="catalytic activity">
    <reaction evidence="1">
        <text>L-aspartyl-tRNA(Asn) + L-glutamine + ATP + H2O = L-asparaginyl-tRNA(Asn) + L-glutamate + ADP + phosphate + 2 H(+)</text>
        <dbReference type="Rhea" id="RHEA:14513"/>
        <dbReference type="Rhea" id="RHEA-COMP:9674"/>
        <dbReference type="Rhea" id="RHEA-COMP:9677"/>
        <dbReference type="ChEBI" id="CHEBI:15377"/>
        <dbReference type="ChEBI" id="CHEBI:15378"/>
        <dbReference type="ChEBI" id="CHEBI:29985"/>
        <dbReference type="ChEBI" id="CHEBI:30616"/>
        <dbReference type="ChEBI" id="CHEBI:43474"/>
        <dbReference type="ChEBI" id="CHEBI:58359"/>
        <dbReference type="ChEBI" id="CHEBI:78515"/>
        <dbReference type="ChEBI" id="CHEBI:78516"/>
        <dbReference type="ChEBI" id="CHEBI:456216"/>
    </reaction>
</comment>
<comment type="subunit">
    <text evidence="1">Heterotrimer of A, B and C subunits.</text>
</comment>
<comment type="similarity">
    <text evidence="1">Belongs to the GatB/GatE family. GatB subfamily.</text>
</comment>
<organism>
    <name type="scientific">Mycoplasmopsis agalactiae (strain NCTC 10123 / CIP 59.7 / PG2)</name>
    <name type="common">Mycoplasma agalactiae</name>
    <dbReference type="NCBI Taxonomy" id="347257"/>
    <lineage>
        <taxon>Bacteria</taxon>
        <taxon>Bacillati</taxon>
        <taxon>Mycoplasmatota</taxon>
        <taxon>Mycoplasmoidales</taxon>
        <taxon>Metamycoplasmataceae</taxon>
        <taxon>Mycoplasmopsis</taxon>
    </lineage>
</organism>
<protein>
    <recommendedName>
        <fullName evidence="1">Aspartyl/glutamyl-tRNA(Asn/Gln) amidotransferase subunit B</fullName>
        <shortName evidence="1">Asp/Glu-ADT subunit B</shortName>
        <ecNumber evidence="1">6.3.5.-</ecNumber>
    </recommendedName>
</protein>
<proteinExistence type="inferred from homology"/>
<keyword id="KW-0067">ATP-binding</keyword>
<keyword id="KW-0436">Ligase</keyword>
<keyword id="KW-0547">Nucleotide-binding</keyword>
<keyword id="KW-0648">Protein biosynthesis</keyword>
<keyword id="KW-1185">Reference proteome</keyword>
<evidence type="ECO:0000255" key="1">
    <source>
        <dbReference type="HAMAP-Rule" id="MF_00121"/>
    </source>
</evidence>
<feature type="chain" id="PRO_1000095226" description="Aspartyl/glutamyl-tRNA(Asn/Gln) amidotransferase subunit B">
    <location>
        <begin position="1"/>
        <end position="472"/>
    </location>
</feature>
<gene>
    <name evidence="1" type="primary">gatB</name>
    <name type="ordered locus">MAG7160</name>
</gene>
<name>GATB_MYCAP</name>
<sequence>MNNFEAIIGIEIHLELNTKTKMFSPSKIDFNAEANTTVNQIDLGYPGTLPLLNKEAVVSGIKLAKALNMTIDRELHFDRKNYFYPDLPKGYQITQFYRPIGSNGYVEINTDLGTKKISIERIHLEEDTARQYHGEKTKLDYNRAGVPLIEIVSNPVISSADEAVAYVDMIRRIALSLNISSAKMEQGSLRADINISLRPKGYSKFGTKVEIKNINSFRAIKNAIEYEIKLQEQKILTNEPILQQTKRYDEETQSTIVMRTKTGTIDYKYFPESNIPFIKLSDEFINNVKLNELPWEKESRYKKEEIQDIYIKSLTNDIELANYFDSINYADRNKLSKLFFAEVVSLANSKNVKAYELNIKTTDLEKTIDLLDKEIISGKSFKKIVPLLVNFDGDIDQLIKEHDLVQISDENIITKWVNEIIAKNEALVTEYTERSEKVIKFVLGNIMKVWGGKVNPQKANEVLLKILNEKFK</sequence>
<dbReference type="EC" id="6.3.5.-" evidence="1"/>
<dbReference type="EMBL" id="CU179680">
    <property type="protein sequence ID" value="CAL59416.1"/>
    <property type="molecule type" value="Genomic_DNA"/>
</dbReference>
<dbReference type="RefSeq" id="WP_011949869.1">
    <property type="nucleotide sequence ID" value="NC_009497.1"/>
</dbReference>
<dbReference type="SMR" id="A5IZF7"/>
<dbReference type="STRING" id="347257.MAG7160"/>
<dbReference type="GeneID" id="93358441"/>
<dbReference type="KEGG" id="maa:MAG7160"/>
<dbReference type="HOGENOM" id="CLU_019240_0_0_14"/>
<dbReference type="Proteomes" id="UP000007065">
    <property type="component" value="Chromosome"/>
</dbReference>
<dbReference type="GO" id="GO:0050566">
    <property type="term" value="F:asparaginyl-tRNA synthase (glutamine-hydrolyzing) activity"/>
    <property type="evidence" value="ECO:0007669"/>
    <property type="project" value="RHEA"/>
</dbReference>
<dbReference type="GO" id="GO:0005524">
    <property type="term" value="F:ATP binding"/>
    <property type="evidence" value="ECO:0007669"/>
    <property type="project" value="UniProtKB-KW"/>
</dbReference>
<dbReference type="GO" id="GO:0050567">
    <property type="term" value="F:glutaminyl-tRNA synthase (glutamine-hydrolyzing) activity"/>
    <property type="evidence" value="ECO:0007669"/>
    <property type="project" value="UniProtKB-UniRule"/>
</dbReference>
<dbReference type="GO" id="GO:0070681">
    <property type="term" value="P:glutaminyl-tRNAGln biosynthesis via transamidation"/>
    <property type="evidence" value="ECO:0007669"/>
    <property type="project" value="TreeGrafter"/>
</dbReference>
<dbReference type="GO" id="GO:0006412">
    <property type="term" value="P:translation"/>
    <property type="evidence" value="ECO:0007669"/>
    <property type="project" value="UniProtKB-UniRule"/>
</dbReference>
<dbReference type="Gene3D" id="1.10.10.410">
    <property type="match status" value="1"/>
</dbReference>
<dbReference type="HAMAP" id="MF_00121">
    <property type="entry name" value="GatB"/>
    <property type="match status" value="1"/>
</dbReference>
<dbReference type="InterPro" id="IPR017959">
    <property type="entry name" value="Asn/Gln-tRNA_amidoTrfase_suB/E"/>
</dbReference>
<dbReference type="InterPro" id="IPR006075">
    <property type="entry name" value="Asn/Gln-tRNA_Trfase_suB/E_cat"/>
</dbReference>
<dbReference type="InterPro" id="IPR018027">
    <property type="entry name" value="Asn/Gln_amidotransferase"/>
</dbReference>
<dbReference type="InterPro" id="IPR003789">
    <property type="entry name" value="Asn/Gln_tRNA_amidoTrase-B-like"/>
</dbReference>
<dbReference type="InterPro" id="IPR004413">
    <property type="entry name" value="GatB"/>
</dbReference>
<dbReference type="InterPro" id="IPR023168">
    <property type="entry name" value="GatB_Yqey_C_2"/>
</dbReference>
<dbReference type="InterPro" id="IPR017958">
    <property type="entry name" value="Gln-tRNA_amidoTrfase_suB_CS"/>
</dbReference>
<dbReference type="InterPro" id="IPR014746">
    <property type="entry name" value="Gln_synth/guanido_kin_cat_dom"/>
</dbReference>
<dbReference type="NCBIfam" id="TIGR00133">
    <property type="entry name" value="gatB"/>
    <property type="match status" value="1"/>
</dbReference>
<dbReference type="NCBIfam" id="NF004012">
    <property type="entry name" value="PRK05477.1-2"/>
    <property type="match status" value="1"/>
</dbReference>
<dbReference type="NCBIfam" id="NF004014">
    <property type="entry name" value="PRK05477.1-4"/>
    <property type="match status" value="1"/>
</dbReference>
<dbReference type="PANTHER" id="PTHR11659">
    <property type="entry name" value="GLUTAMYL-TRNA GLN AMIDOTRANSFERASE SUBUNIT B MITOCHONDRIAL AND PROKARYOTIC PET112-RELATED"/>
    <property type="match status" value="1"/>
</dbReference>
<dbReference type="PANTHER" id="PTHR11659:SF0">
    <property type="entry name" value="GLUTAMYL-TRNA(GLN) AMIDOTRANSFERASE SUBUNIT B, MITOCHONDRIAL"/>
    <property type="match status" value="1"/>
</dbReference>
<dbReference type="Pfam" id="PF02934">
    <property type="entry name" value="GatB_N"/>
    <property type="match status" value="1"/>
</dbReference>
<dbReference type="Pfam" id="PF02637">
    <property type="entry name" value="GatB_Yqey"/>
    <property type="match status" value="1"/>
</dbReference>
<dbReference type="SMART" id="SM00845">
    <property type="entry name" value="GatB_Yqey"/>
    <property type="match status" value="1"/>
</dbReference>
<dbReference type="SUPFAM" id="SSF89095">
    <property type="entry name" value="GatB/YqeY motif"/>
    <property type="match status" value="1"/>
</dbReference>
<dbReference type="SUPFAM" id="SSF55931">
    <property type="entry name" value="Glutamine synthetase/guanido kinase"/>
    <property type="match status" value="1"/>
</dbReference>
<dbReference type="PROSITE" id="PS01234">
    <property type="entry name" value="GATB"/>
    <property type="match status" value="1"/>
</dbReference>
<accession>A5IZF7</accession>
<reference key="1">
    <citation type="journal article" date="2007" name="PLoS Genet.">
        <title>Being pathogenic, plastic, and sexual while living with a nearly minimal bacterial genome.</title>
        <authorList>
            <person name="Sirand-Pugnet P."/>
            <person name="Lartigue C."/>
            <person name="Marenda M."/>
            <person name="Jacob D."/>
            <person name="Barre A."/>
            <person name="Barbe V."/>
            <person name="Schenowitz C."/>
            <person name="Mangenot S."/>
            <person name="Couloux A."/>
            <person name="Segurens B."/>
            <person name="de Daruvar A."/>
            <person name="Blanchard A."/>
            <person name="Citti C."/>
        </authorList>
    </citation>
    <scope>NUCLEOTIDE SEQUENCE [LARGE SCALE GENOMIC DNA]</scope>
    <source>
        <strain>NCTC 10123 / CIP 59.7 / PG2</strain>
    </source>
</reference>